<accession>P63036</accession>
<accession>P54102</accession>
<proteinExistence type="evidence at protein level"/>
<protein>
    <recommendedName>
        <fullName>DnaJ homolog subfamily A member 1</fullName>
    </recommendedName>
    <alternativeName>
        <fullName>DnaJ-like protein 1</fullName>
    </alternativeName>
    <alternativeName>
        <fullName>Heat shock protein J2</fullName>
        <shortName>HSJ-2</shortName>
    </alternativeName>
</protein>
<feature type="chain" id="PRO_0000071010" description="DnaJ homolog subfamily A member 1">
    <location>
        <begin position="1"/>
        <end position="394"/>
    </location>
</feature>
<feature type="propeptide" id="PRO_0000396755" description="Removed in mature form" evidence="1">
    <location>
        <begin position="395"/>
        <end position="397"/>
    </location>
</feature>
<feature type="domain" description="J">
    <location>
        <begin position="6"/>
        <end position="68"/>
    </location>
</feature>
<feature type="repeat" description="CXXCXGXG motif">
    <location>
        <begin position="134"/>
        <end position="141"/>
    </location>
</feature>
<feature type="repeat" description="CXXCXGXG motif">
    <location>
        <begin position="150"/>
        <end position="157"/>
    </location>
</feature>
<feature type="repeat" description="CXXCXGXG motif">
    <location>
        <begin position="177"/>
        <end position="184"/>
    </location>
</feature>
<feature type="repeat" description="CXXCXGXG motif">
    <location>
        <begin position="193"/>
        <end position="200"/>
    </location>
</feature>
<feature type="zinc finger region" description="CR-type">
    <location>
        <begin position="121"/>
        <end position="205"/>
    </location>
</feature>
<feature type="region of interest" description="Disordered" evidence="3">
    <location>
        <begin position="352"/>
        <end position="397"/>
    </location>
</feature>
<feature type="compositionally biased region" description="Acidic residues" evidence="3">
    <location>
        <begin position="353"/>
        <end position="365"/>
    </location>
</feature>
<feature type="binding site" evidence="1">
    <location>
        <position position="134"/>
    </location>
    <ligand>
        <name>Zn(2+)</name>
        <dbReference type="ChEBI" id="CHEBI:29105"/>
        <label>1</label>
    </ligand>
</feature>
<feature type="binding site" evidence="1">
    <location>
        <position position="137"/>
    </location>
    <ligand>
        <name>Zn(2+)</name>
        <dbReference type="ChEBI" id="CHEBI:29105"/>
        <label>1</label>
    </ligand>
</feature>
<feature type="binding site" evidence="1">
    <location>
        <position position="150"/>
    </location>
    <ligand>
        <name>Zn(2+)</name>
        <dbReference type="ChEBI" id="CHEBI:29105"/>
        <label>2</label>
    </ligand>
</feature>
<feature type="binding site" evidence="1">
    <location>
        <position position="153"/>
    </location>
    <ligand>
        <name>Zn(2+)</name>
        <dbReference type="ChEBI" id="CHEBI:29105"/>
        <label>2</label>
    </ligand>
</feature>
<feature type="binding site" evidence="1">
    <location>
        <position position="177"/>
    </location>
    <ligand>
        <name>Zn(2+)</name>
        <dbReference type="ChEBI" id="CHEBI:29105"/>
        <label>2</label>
    </ligand>
</feature>
<feature type="binding site" evidence="1">
    <location>
        <position position="180"/>
    </location>
    <ligand>
        <name>Zn(2+)</name>
        <dbReference type="ChEBI" id="CHEBI:29105"/>
        <label>2</label>
    </ligand>
</feature>
<feature type="binding site" evidence="1">
    <location>
        <position position="193"/>
    </location>
    <ligand>
        <name>Zn(2+)</name>
        <dbReference type="ChEBI" id="CHEBI:29105"/>
        <label>1</label>
    </ligand>
</feature>
<feature type="binding site" evidence="1">
    <location>
        <position position="196"/>
    </location>
    <ligand>
        <name>Zn(2+)</name>
        <dbReference type="ChEBI" id="CHEBI:29105"/>
        <label>1</label>
    </ligand>
</feature>
<feature type="modified residue" description="N6-acetyllysine" evidence="2">
    <location>
        <position position="66"/>
    </location>
</feature>
<feature type="modified residue" description="Phosphoserine" evidence="6">
    <location>
        <position position="83"/>
    </location>
</feature>
<feature type="modified residue" description="Phosphoserine" evidence="6">
    <location>
        <position position="335"/>
    </location>
</feature>
<feature type="modified residue" description="Phosphotyrosine" evidence="2">
    <location>
        <position position="381"/>
    </location>
</feature>
<feature type="modified residue" description="Cysteine methyl ester" evidence="1">
    <location>
        <position position="394"/>
    </location>
</feature>
<feature type="lipid moiety-binding region" description="S-farnesyl cysteine" evidence="1">
    <location>
        <position position="394"/>
    </location>
</feature>
<gene>
    <name type="primary">Dnaja1</name>
    <name type="synonym">Hsj2</name>
    <name type="synonym">Rdj1</name>
</gene>
<dbReference type="EMBL" id="U53922">
    <property type="protein sequence ID" value="AAA98855.1"/>
    <property type="molecule type" value="mRNA"/>
</dbReference>
<dbReference type="EMBL" id="BC062009">
    <property type="protein sequence ID" value="AAH62009.1"/>
    <property type="molecule type" value="mRNA"/>
</dbReference>
<dbReference type="RefSeq" id="NP_075223.1">
    <property type="nucleotide sequence ID" value="NM_022934.1"/>
</dbReference>
<dbReference type="RefSeq" id="XP_006238161.1">
    <property type="nucleotide sequence ID" value="XM_006238099.2"/>
</dbReference>
<dbReference type="BMRB" id="P63036"/>
<dbReference type="SMR" id="P63036"/>
<dbReference type="BioGRID" id="249221">
    <property type="interactions" value="6"/>
</dbReference>
<dbReference type="CORUM" id="P63036"/>
<dbReference type="FunCoup" id="P63036">
    <property type="interactions" value="3478"/>
</dbReference>
<dbReference type="IntAct" id="P63036">
    <property type="interactions" value="2"/>
</dbReference>
<dbReference type="STRING" id="10116.ENSRNOP00000010061"/>
<dbReference type="iPTMnet" id="P63036"/>
<dbReference type="PhosphoSitePlus" id="P63036"/>
<dbReference type="jPOST" id="P63036"/>
<dbReference type="PaxDb" id="10116-ENSRNOP00000010061"/>
<dbReference type="Ensembl" id="ENSRNOT00000010061.4">
    <property type="protein sequence ID" value="ENSRNOP00000010061.2"/>
    <property type="gene ID" value="ENSRNOG00000007029.4"/>
</dbReference>
<dbReference type="GeneID" id="65028"/>
<dbReference type="KEGG" id="rno:65028"/>
<dbReference type="UCSC" id="RGD:620942">
    <property type="organism name" value="rat"/>
</dbReference>
<dbReference type="AGR" id="RGD:620942"/>
<dbReference type="CTD" id="3301"/>
<dbReference type="RGD" id="620942">
    <property type="gene designation" value="Dnaja1"/>
</dbReference>
<dbReference type="eggNOG" id="KOG0712">
    <property type="taxonomic scope" value="Eukaryota"/>
</dbReference>
<dbReference type="GeneTree" id="ENSGT00940000153558"/>
<dbReference type="HOGENOM" id="CLU_017633_10_0_1"/>
<dbReference type="InParanoid" id="P63036"/>
<dbReference type="OMA" id="NALCTKC"/>
<dbReference type="OrthoDB" id="550424at2759"/>
<dbReference type="PhylomeDB" id="P63036"/>
<dbReference type="TreeFam" id="TF105141"/>
<dbReference type="Reactome" id="R-RNO-3371497">
    <property type="pathway name" value="HSP90 chaperone cycle for steroid hormone receptors (SHR) in the presence of ligand"/>
</dbReference>
<dbReference type="Reactome" id="R-RNO-9841251">
    <property type="pathway name" value="Mitochondrial unfolded protein response (UPRmt)"/>
</dbReference>
<dbReference type="PRO" id="PR:P63036"/>
<dbReference type="Proteomes" id="UP000002494">
    <property type="component" value="Chromosome 5"/>
</dbReference>
<dbReference type="Bgee" id="ENSRNOG00000007029">
    <property type="expression patterns" value="Expressed in cerebellum and 20 other cell types or tissues"/>
</dbReference>
<dbReference type="GO" id="GO:0005737">
    <property type="term" value="C:cytoplasm"/>
    <property type="evidence" value="ECO:0000318"/>
    <property type="project" value="GO_Central"/>
</dbReference>
<dbReference type="GO" id="GO:0005829">
    <property type="term" value="C:cytosol"/>
    <property type="evidence" value="ECO:0000266"/>
    <property type="project" value="RGD"/>
</dbReference>
<dbReference type="GO" id="GO:0005783">
    <property type="term" value="C:endoplasmic reticulum"/>
    <property type="evidence" value="ECO:0007669"/>
    <property type="project" value="UniProtKB-KW"/>
</dbReference>
<dbReference type="GO" id="GO:0016020">
    <property type="term" value="C:membrane"/>
    <property type="evidence" value="ECO:0000266"/>
    <property type="project" value="RGD"/>
</dbReference>
<dbReference type="GO" id="GO:0005739">
    <property type="term" value="C:mitochondrion"/>
    <property type="evidence" value="ECO:0007669"/>
    <property type="project" value="UniProtKB-SubCell"/>
</dbReference>
<dbReference type="GO" id="GO:0005634">
    <property type="term" value="C:nucleus"/>
    <property type="evidence" value="ECO:0007669"/>
    <property type="project" value="UniProtKB-SubCell"/>
</dbReference>
<dbReference type="GO" id="GO:0048471">
    <property type="term" value="C:perinuclear region of cytoplasm"/>
    <property type="evidence" value="ECO:0007669"/>
    <property type="project" value="UniProtKB-SubCell"/>
</dbReference>
<dbReference type="GO" id="GO:0005524">
    <property type="term" value="F:ATP binding"/>
    <property type="evidence" value="ECO:0007669"/>
    <property type="project" value="InterPro"/>
</dbReference>
<dbReference type="GO" id="GO:0001671">
    <property type="term" value="F:ATPase activator activity"/>
    <property type="evidence" value="ECO:0000314"/>
    <property type="project" value="RGD"/>
</dbReference>
<dbReference type="GO" id="GO:0055131">
    <property type="term" value="F:C3HC4-type RING finger domain binding"/>
    <property type="evidence" value="ECO:0000266"/>
    <property type="project" value="RGD"/>
</dbReference>
<dbReference type="GO" id="GO:0001664">
    <property type="term" value="F:G protein-coupled receptor binding"/>
    <property type="evidence" value="ECO:0000266"/>
    <property type="project" value="RGD"/>
</dbReference>
<dbReference type="GO" id="GO:0030544">
    <property type="term" value="F:Hsp70 protein binding"/>
    <property type="evidence" value="ECO:0000250"/>
    <property type="project" value="UniProtKB"/>
</dbReference>
<dbReference type="GO" id="GO:0050750">
    <property type="term" value="F:low-density lipoprotein particle receptor binding"/>
    <property type="evidence" value="ECO:0000266"/>
    <property type="project" value="RGD"/>
</dbReference>
<dbReference type="GO" id="GO:0051087">
    <property type="term" value="F:protein-folding chaperone binding"/>
    <property type="evidence" value="ECO:0000250"/>
    <property type="project" value="UniProtKB"/>
</dbReference>
<dbReference type="GO" id="GO:0030957">
    <property type="term" value="F:Tat protein binding"/>
    <property type="evidence" value="ECO:0000266"/>
    <property type="project" value="RGD"/>
</dbReference>
<dbReference type="GO" id="GO:0031625">
    <property type="term" value="F:ubiquitin protein ligase binding"/>
    <property type="evidence" value="ECO:0000266"/>
    <property type="project" value="RGD"/>
</dbReference>
<dbReference type="GO" id="GO:0051082">
    <property type="term" value="F:unfolded protein binding"/>
    <property type="evidence" value="ECO:0007669"/>
    <property type="project" value="InterPro"/>
</dbReference>
<dbReference type="GO" id="GO:0008270">
    <property type="term" value="F:zinc ion binding"/>
    <property type="evidence" value="ECO:0007669"/>
    <property type="project" value="UniProtKB-KW"/>
</dbReference>
<dbReference type="GO" id="GO:0030521">
    <property type="term" value="P:androgen receptor signaling pathway"/>
    <property type="evidence" value="ECO:0000266"/>
    <property type="project" value="RGD"/>
</dbReference>
<dbReference type="GO" id="GO:0030317">
    <property type="term" value="P:flagellated sperm motility"/>
    <property type="evidence" value="ECO:0000266"/>
    <property type="project" value="RGD"/>
</dbReference>
<dbReference type="GO" id="GO:0043066">
    <property type="term" value="P:negative regulation of apoptotic process"/>
    <property type="evidence" value="ECO:0000250"/>
    <property type="project" value="UniProtKB"/>
</dbReference>
<dbReference type="GO" id="GO:1903748">
    <property type="term" value="P:negative regulation of establishment of protein localization to mitochondrion"/>
    <property type="evidence" value="ECO:0000266"/>
    <property type="project" value="RGD"/>
</dbReference>
<dbReference type="GO" id="GO:0043508">
    <property type="term" value="P:negative regulation of JUN kinase activity"/>
    <property type="evidence" value="ECO:0000250"/>
    <property type="project" value="UniProtKB"/>
</dbReference>
<dbReference type="GO" id="GO:1905259">
    <property type="term" value="P:negative regulation of nitrosative stress-induced intrinsic apoptotic signaling pathway"/>
    <property type="evidence" value="ECO:0000266"/>
    <property type="project" value="RGD"/>
</dbReference>
<dbReference type="GO" id="GO:0031397">
    <property type="term" value="P:negative regulation of protein ubiquitination"/>
    <property type="evidence" value="ECO:0000266"/>
    <property type="project" value="RGD"/>
</dbReference>
<dbReference type="GO" id="GO:0043065">
    <property type="term" value="P:positive regulation of apoptotic process"/>
    <property type="evidence" value="ECO:0000250"/>
    <property type="project" value="UniProtKB"/>
</dbReference>
<dbReference type="GO" id="GO:0070585">
    <property type="term" value="P:protein localization to mitochondrion"/>
    <property type="evidence" value="ECO:0000250"/>
    <property type="project" value="UniProtKB"/>
</dbReference>
<dbReference type="GO" id="GO:0042026">
    <property type="term" value="P:protein refolding"/>
    <property type="evidence" value="ECO:0000318"/>
    <property type="project" value="GO_Central"/>
</dbReference>
<dbReference type="GO" id="GO:0051223">
    <property type="term" value="P:regulation of protein transport"/>
    <property type="evidence" value="ECO:0000250"/>
    <property type="project" value="UniProtKB"/>
</dbReference>
<dbReference type="GO" id="GO:0009408">
    <property type="term" value="P:response to heat"/>
    <property type="evidence" value="ECO:0007669"/>
    <property type="project" value="InterPro"/>
</dbReference>
<dbReference type="GO" id="GO:0007283">
    <property type="term" value="P:spermatogenesis"/>
    <property type="evidence" value="ECO:0000266"/>
    <property type="project" value="RGD"/>
</dbReference>
<dbReference type="CDD" id="cd06257">
    <property type="entry name" value="DnaJ"/>
    <property type="match status" value="1"/>
</dbReference>
<dbReference type="CDD" id="cd10747">
    <property type="entry name" value="DnaJ_C"/>
    <property type="match status" value="1"/>
</dbReference>
<dbReference type="CDD" id="cd10719">
    <property type="entry name" value="DnaJ_zf"/>
    <property type="match status" value="1"/>
</dbReference>
<dbReference type="FunFam" id="2.60.260.20:FF:000068">
    <property type="entry name" value="Chaperone protein dnaJ 3"/>
    <property type="match status" value="1"/>
</dbReference>
<dbReference type="FunFam" id="2.10.230.10:FF:000005">
    <property type="entry name" value="DnaJ homolog subfamily A member 1"/>
    <property type="match status" value="1"/>
</dbReference>
<dbReference type="FunFam" id="1.10.287.110:FF:000014">
    <property type="entry name" value="dnaJ homolog subfamily A member 1"/>
    <property type="match status" value="1"/>
</dbReference>
<dbReference type="FunFam" id="2.60.260.20:FF:000003">
    <property type="entry name" value="DnaJ subfamily A member 2"/>
    <property type="match status" value="1"/>
</dbReference>
<dbReference type="Gene3D" id="1.10.287.110">
    <property type="entry name" value="DnaJ domain"/>
    <property type="match status" value="1"/>
</dbReference>
<dbReference type="Gene3D" id="2.10.230.10">
    <property type="entry name" value="Heat shock protein DnaJ, cysteine-rich domain"/>
    <property type="match status" value="1"/>
</dbReference>
<dbReference type="Gene3D" id="2.60.260.20">
    <property type="entry name" value="Urease metallochaperone UreE, N-terminal domain"/>
    <property type="match status" value="2"/>
</dbReference>
<dbReference type="HAMAP" id="MF_01152">
    <property type="entry name" value="DnaJ"/>
    <property type="match status" value="1"/>
</dbReference>
<dbReference type="InterPro" id="IPR012724">
    <property type="entry name" value="DnaJ"/>
</dbReference>
<dbReference type="InterPro" id="IPR002939">
    <property type="entry name" value="DnaJ_C"/>
</dbReference>
<dbReference type="InterPro" id="IPR001623">
    <property type="entry name" value="DnaJ_domain"/>
</dbReference>
<dbReference type="InterPro" id="IPR018253">
    <property type="entry name" value="DnaJ_domain_CS"/>
</dbReference>
<dbReference type="InterPro" id="IPR044713">
    <property type="entry name" value="DNJA1/2-like"/>
</dbReference>
<dbReference type="InterPro" id="IPR008971">
    <property type="entry name" value="HSP40/DnaJ_pept-bd"/>
</dbReference>
<dbReference type="InterPro" id="IPR001305">
    <property type="entry name" value="HSP_DnaJ_Cys-rich_dom"/>
</dbReference>
<dbReference type="InterPro" id="IPR036410">
    <property type="entry name" value="HSP_DnaJ_Cys-rich_dom_sf"/>
</dbReference>
<dbReference type="InterPro" id="IPR036869">
    <property type="entry name" value="J_dom_sf"/>
</dbReference>
<dbReference type="PANTHER" id="PTHR43888">
    <property type="entry name" value="DNAJ-LIKE-2, ISOFORM A-RELATED"/>
    <property type="match status" value="1"/>
</dbReference>
<dbReference type="Pfam" id="PF00226">
    <property type="entry name" value="DnaJ"/>
    <property type="match status" value="1"/>
</dbReference>
<dbReference type="Pfam" id="PF01556">
    <property type="entry name" value="DnaJ_C"/>
    <property type="match status" value="1"/>
</dbReference>
<dbReference type="Pfam" id="PF00684">
    <property type="entry name" value="DnaJ_CXXCXGXG"/>
    <property type="match status" value="1"/>
</dbReference>
<dbReference type="PRINTS" id="PR00625">
    <property type="entry name" value="JDOMAIN"/>
</dbReference>
<dbReference type="SMART" id="SM00271">
    <property type="entry name" value="DnaJ"/>
    <property type="match status" value="1"/>
</dbReference>
<dbReference type="SUPFAM" id="SSF46565">
    <property type="entry name" value="Chaperone J-domain"/>
    <property type="match status" value="1"/>
</dbReference>
<dbReference type="SUPFAM" id="SSF57938">
    <property type="entry name" value="DnaJ/Hsp40 cysteine-rich domain"/>
    <property type="match status" value="1"/>
</dbReference>
<dbReference type="SUPFAM" id="SSF49493">
    <property type="entry name" value="HSP40/DnaJ peptide-binding domain"/>
    <property type="match status" value="2"/>
</dbReference>
<dbReference type="PROSITE" id="PS00636">
    <property type="entry name" value="DNAJ_1"/>
    <property type="match status" value="1"/>
</dbReference>
<dbReference type="PROSITE" id="PS50076">
    <property type="entry name" value="DNAJ_2"/>
    <property type="match status" value="1"/>
</dbReference>
<dbReference type="PROSITE" id="PS51188">
    <property type="entry name" value="ZF_CR"/>
    <property type="match status" value="1"/>
</dbReference>
<reference key="1">
    <citation type="journal article" date="1998" name="Protein Sci.">
        <title>Isolation and characterization of a DnaJ-like protein in rats: the C-terminal 10-kDa domain of hsc70 is not essential for stimulating the ATP-hydrolytic activity of hsc70 by a DnaJ-like protein.</title>
        <authorList>
            <person name="Leng C.H."/>
            <person name="Brodsky J.L."/>
            <person name="Wang C."/>
        </authorList>
    </citation>
    <scope>NUCLEOTIDE SEQUENCE [MRNA]</scope>
    <scope>FUNCTION</scope>
    <source>
        <strain>Sprague-Dawley</strain>
        <tissue>Brain</tissue>
    </source>
</reference>
<reference key="2">
    <citation type="journal article" date="2004" name="Genome Res.">
        <title>The status, quality, and expansion of the NIH full-length cDNA project: the Mammalian Gene Collection (MGC).</title>
        <authorList>
            <consortium name="The MGC Project Team"/>
        </authorList>
    </citation>
    <scope>NUCLEOTIDE SEQUENCE [LARGE SCALE MRNA]</scope>
    <source>
        <tissue>Prostate</tissue>
    </source>
</reference>
<reference key="3">
    <citation type="journal article" date="2000" name="J. Biol. Chem.">
        <title>Human DnaJ homologs dj2 and dj3, and bag-1 are positive cochaperones of hsc70.</title>
        <authorList>
            <person name="Terada K."/>
            <person name="Mori M."/>
        </authorList>
    </citation>
    <scope>FUNCTION</scope>
    <scope>SUBCELLULAR LOCATION</scope>
    <scope>SUBUNIT</scope>
    <scope>TISSUE SPECIFICITY</scope>
</reference>
<reference key="4">
    <citation type="journal article" date="2012" name="Nat. Commun.">
        <title>Quantitative maps of protein phosphorylation sites across 14 different rat organs and tissues.</title>
        <authorList>
            <person name="Lundby A."/>
            <person name="Secher A."/>
            <person name="Lage K."/>
            <person name="Nordsborg N.B."/>
            <person name="Dmytriyev A."/>
            <person name="Lundby C."/>
            <person name="Olsen J.V."/>
        </authorList>
    </citation>
    <scope>PHOSPHORYLATION [LARGE SCALE ANALYSIS] AT SER-83 AND SER-335</scope>
    <scope>IDENTIFICATION BY MASS SPECTROMETRY [LARGE SCALE ANALYSIS]</scope>
</reference>
<keyword id="KW-0007">Acetylation</keyword>
<keyword id="KW-0143">Chaperone</keyword>
<keyword id="KW-0963">Cytoplasm</keyword>
<keyword id="KW-0256">Endoplasmic reticulum</keyword>
<keyword id="KW-0449">Lipoprotein</keyword>
<keyword id="KW-0472">Membrane</keyword>
<keyword id="KW-0479">Metal-binding</keyword>
<keyword id="KW-0488">Methylation</keyword>
<keyword id="KW-0492">Microsome</keyword>
<keyword id="KW-0496">Mitochondrion</keyword>
<keyword id="KW-0539">Nucleus</keyword>
<keyword id="KW-0597">Phosphoprotein</keyword>
<keyword id="KW-0636">Prenylation</keyword>
<keyword id="KW-1185">Reference proteome</keyword>
<keyword id="KW-0677">Repeat</keyword>
<keyword id="KW-0862">Zinc</keyword>
<keyword id="KW-0863">Zinc-finger</keyword>
<comment type="function">
    <text evidence="1 4 5">Functions as a co-chaperone for HSPA1B and negatively regulates the translocation of BAX from the cytosol to mitochondria in response to cellular stress, thereby protecting cells against apoptosis. Promotes apoptosis in response to cellular stress mediated by exposure to anisomycin or UV. Stimulates ATP hydrolysis, but not the folding of unfolded proteins mediated by HSPA1A (in vitro) (By similarity). Co-chaperone for HSPA8/Hsc70. Plays a role in protein transport into mitochondria via its role as co-chaperone (PubMed:10816573).</text>
</comment>
<comment type="subunit">
    <text evidence="2">Identified in a complex with HSPA1B and BAX. Interacts with RNF207.</text>
</comment>
<comment type="subcellular location">
    <subcellularLocation>
        <location evidence="1">Membrane</location>
        <topology evidence="1">Lipid-anchor</topology>
    </subcellularLocation>
    <subcellularLocation>
        <location evidence="4">Cytoplasm</location>
    </subcellularLocation>
    <subcellularLocation>
        <location evidence="4">Microsome</location>
    </subcellularLocation>
    <subcellularLocation>
        <location evidence="4">Mitochondrion</location>
    </subcellularLocation>
    <subcellularLocation>
        <location evidence="4">Nucleus</location>
    </subcellularLocation>
    <subcellularLocation>
        <location evidence="1">Cytoplasm</location>
        <location evidence="1">Perinuclear region</location>
    </subcellularLocation>
    <text>Primarily cytoplasmic and associated with microsomes. A minor proportion is associated with nuclei and mitochondria.</text>
</comment>
<comment type="tissue specificity">
    <text evidence="4">Detected in liver (at protein level).</text>
</comment>
<organism>
    <name type="scientific">Rattus norvegicus</name>
    <name type="common">Rat</name>
    <dbReference type="NCBI Taxonomy" id="10116"/>
    <lineage>
        <taxon>Eukaryota</taxon>
        <taxon>Metazoa</taxon>
        <taxon>Chordata</taxon>
        <taxon>Craniata</taxon>
        <taxon>Vertebrata</taxon>
        <taxon>Euteleostomi</taxon>
        <taxon>Mammalia</taxon>
        <taxon>Eutheria</taxon>
        <taxon>Euarchontoglires</taxon>
        <taxon>Glires</taxon>
        <taxon>Rodentia</taxon>
        <taxon>Myomorpha</taxon>
        <taxon>Muroidea</taxon>
        <taxon>Muridae</taxon>
        <taxon>Murinae</taxon>
        <taxon>Rattus</taxon>
    </lineage>
</organism>
<name>DNJA1_RAT</name>
<sequence length="397" mass="44868">MVKETTYYDVLGVKPNATQEELKKAYRKLALKYHPDKNPNEGEKFKQISQAYEVLADSKKRELYDKGGEQAIKEGGAGGGFGSPMDIFDMFFGGGGRMQRERRGKNVVHQLSVTLEDLYNGATRKLALQKNVICDKCEGRGGKKGAVECCPNCRGTGMQIRIHQIGPGMVQQIQSVCMECQGHGERISPKDRCKSCNGRKIVREKKILEVHIDKGMKDGQKITFHGEGDQEPGLEPGDIIIVLDQKDHAVFTRRGEDLFMCMDIQLVEALCGFQKPISTLDNRTIVITSHPGQIVKHGDIKCVLNEGMPIYRRPYEKGRLIIEFKVNFPENGFLSPDKLSLLEKLLPERKEVEETDEMDQVELVDFDPNQERRRHYNGEAYEDDEHHPRGGVQCQTS</sequence>
<evidence type="ECO:0000250" key="1"/>
<evidence type="ECO:0000250" key="2">
    <source>
        <dbReference type="UniProtKB" id="P31689"/>
    </source>
</evidence>
<evidence type="ECO:0000256" key="3">
    <source>
        <dbReference type="SAM" id="MobiDB-lite"/>
    </source>
</evidence>
<evidence type="ECO:0000269" key="4">
    <source>
    </source>
</evidence>
<evidence type="ECO:0000269" key="5">
    <source>
    </source>
</evidence>
<evidence type="ECO:0007744" key="6">
    <source>
    </source>
</evidence>